<feature type="chain" id="PRO_0000073496" description="Calcineurin subunit B">
    <location>
        <begin position="1"/>
        <end position="174"/>
    </location>
</feature>
<feature type="domain" description="EF-hand 1" evidence="2">
    <location>
        <begin position="21"/>
        <end position="56"/>
    </location>
</feature>
<feature type="domain" description="EF-hand 2" evidence="2">
    <location>
        <begin position="60"/>
        <end position="88"/>
    </location>
</feature>
<feature type="domain" description="EF-hand 3" evidence="2">
    <location>
        <begin position="90"/>
        <end position="125"/>
    </location>
</feature>
<feature type="domain" description="EF-hand 4" evidence="2">
    <location>
        <begin position="131"/>
        <end position="166"/>
    </location>
</feature>
<feature type="binding site" evidence="2">
    <location>
        <position position="34"/>
    </location>
    <ligand>
        <name>Ca(2+)</name>
        <dbReference type="ChEBI" id="CHEBI:29108"/>
        <label>1</label>
    </ligand>
</feature>
<feature type="binding site" evidence="2">
    <location>
        <position position="36"/>
    </location>
    <ligand>
        <name>Ca(2+)</name>
        <dbReference type="ChEBI" id="CHEBI:29108"/>
        <label>1</label>
    </ligand>
</feature>
<feature type="binding site" evidence="2">
    <location>
        <position position="38"/>
    </location>
    <ligand>
        <name>Ca(2+)</name>
        <dbReference type="ChEBI" id="CHEBI:29108"/>
        <label>1</label>
    </ligand>
</feature>
<feature type="binding site" evidence="2">
    <location>
        <position position="40"/>
    </location>
    <ligand>
        <name>Ca(2+)</name>
        <dbReference type="ChEBI" id="CHEBI:29108"/>
        <label>1</label>
    </ligand>
</feature>
<feature type="binding site" evidence="2">
    <location>
        <position position="45"/>
    </location>
    <ligand>
        <name>Ca(2+)</name>
        <dbReference type="ChEBI" id="CHEBI:29108"/>
        <label>1</label>
    </ligand>
</feature>
<feature type="binding site" evidence="2">
    <location>
        <position position="66"/>
    </location>
    <ligand>
        <name>Ca(2+)</name>
        <dbReference type="ChEBI" id="CHEBI:29108"/>
        <label>2</label>
    </ligand>
</feature>
<feature type="binding site" evidence="2">
    <location>
        <position position="68"/>
    </location>
    <ligand>
        <name>Ca(2+)</name>
        <dbReference type="ChEBI" id="CHEBI:29108"/>
        <label>2</label>
    </ligand>
</feature>
<feature type="binding site" evidence="2">
    <location>
        <position position="72"/>
    </location>
    <ligand>
        <name>Ca(2+)</name>
        <dbReference type="ChEBI" id="CHEBI:29108"/>
        <label>2</label>
    </ligand>
</feature>
<feature type="binding site" evidence="2">
    <location>
        <position position="77"/>
    </location>
    <ligand>
        <name>Ca(2+)</name>
        <dbReference type="ChEBI" id="CHEBI:29108"/>
        <label>2</label>
    </ligand>
</feature>
<feature type="binding site" evidence="2">
    <location>
        <position position="103"/>
    </location>
    <ligand>
        <name>Ca(2+)</name>
        <dbReference type="ChEBI" id="CHEBI:29108"/>
        <label>3</label>
    </ligand>
</feature>
<feature type="binding site" evidence="2">
    <location>
        <position position="105"/>
    </location>
    <ligand>
        <name>Ca(2+)</name>
        <dbReference type="ChEBI" id="CHEBI:29108"/>
        <label>3</label>
    </ligand>
</feature>
<feature type="binding site" evidence="2">
    <location>
        <position position="107"/>
    </location>
    <ligand>
        <name>Ca(2+)</name>
        <dbReference type="ChEBI" id="CHEBI:29108"/>
        <label>3</label>
    </ligand>
</feature>
<feature type="binding site" evidence="2">
    <location>
        <position position="109"/>
    </location>
    <ligand>
        <name>Ca(2+)</name>
        <dbReference type="ChEBI" id="CHEBI:29108"/>
        <label>3</label>
    </ligand>
</feature>
<feature type="binding site" evidence="2">
    <location>
        <position position="114"/>
    </location>
    <ligand>
        <name>Ca(2+)</name>
        <dbReference type="ChEBI" id="CHEBI:29108"/>
        <label>3</label>
    </ligand>
</feature>
<feature type="binding site" evidence="2">
    <location>
        <position position="144"/>
    </location>
    <ligand>
        <name>Ca(2+)</name>
        <dbReference type="ChEBI" id="CHEBI:29108"/>
        <label>4</label>
    </ligand>
</feature>
<feature type="binding site" evidence="2">
    <location>
        <position position="146"/>
    </location>
    <ligand>
        <name>Ca(2+)</name>
        <dbReference type="ChEBI" id="CHEBI:29108"/>
        <label>4</label>
    </ligand>
</feature>
<feature type="binding site" evidence="2">
    <location>
        <position position="148"/>
    </location>
    <ligand>
        <name>Ca(2+)</name>
        <dbReference type="ChEBI" id="CHEBI:29108"/>
        <label>4</label>
    </ligand>
</feature>
<feature type="binding site" evidence="2">
    <location>
        <position position="150"/>
    </location>
    <ligand>
        <name>Ca(2+)</name>
        <dbReference type="ChEBI" id="CHEBI:29108"/>
        <label>4</label>
    </ligand>
</feature>
<feature type="binding site" evidence="2">
    <location>
        <position position="155"/>
    </location>
    <ligand>
        <name>Ca(2+)</name>
        <dbReference type="ChEBI" id="CHEBI:29108"/>
        <label>4</label>
    </ligand>
</feature>
<reference key="1">
    <citation type="journal article" date="2002" name="Nature">
        <title>The genome sequence of Schizosaccharomyces pombe.</title>
        <authorList>
            <person name="Wood V."/>
            <person name="Gwilliam R."/>
            <person name="Rajandream M.A."/>
            <person name="Lyne M.H."/>
            <person name="Lyne R."/>
            <person name="Stewart A."/>
            <person name="Sgouros J.G."/>
            <person name="Peat N."/>
            <person name="Hayles J."/>
            <person name="Baker S.G."/>
            <person name="Basham D."/>
            <person name="Bowman S."/>
            <person name="Brooks K."/>
            <person name="Brown D."/>
            <person name="Brown S."/>
            <person name="Chillingworth T."/>
            <person name="Churcher C.M."/>
            <person name="Collins M."/>
            <person name="Connor R."/>
            <person name="Cronin A."/>
            <person name="Davis P."/>
            <person name="Feltwell T."/>
            <person name="Fraser A."/>
            <person name="Gentles S."/>
            <person name="Goble A."/>
            <person name="Hamlin N."/>
            <person name="Harris D.E."/>
            <person name="Hidalgo J."/>
            <person name="Hodgson G."/>
            <person name="Holroyd S."/>
            <person name="Hornsby T."/>
            <person name="Howarth S."/>
            <person name="Huckle E.J."/>
            <person name="Hunt S."/>
            <person name="Jagels K."/>
            <person name="James K.D."/>
            <person name="Jones L."/>
            <person name="Jones M."/>
            <person name="Leather S."/>
            <person name="McDonald S."/>
            <person name="McLean J."/>
            <person name="Mooney P."/>
            <person name="Moule S."/>
            <person name="Mungall K.L."/>
            <person name="Murphy L.D."/>
            <person name="Niblett D."/>
            <person name="Odell C."/>
            <person name="Oliver K."/>
            <person name="O'Neil S."/>
            <person name="Pearson D."/>
            <person name="Quail M.A."/>
            <person name="Rabbinowitsch E."/>
            <person name="Rutherford K.M."/>
            <person name="Rutter S."/>
            <person name="Saunders D."/>
            <person name="Seeger K."/>
            <person name="Sharp S."/>
            <person name="Skelton J."/>
            <person name="Simmonds M.N."/>
            <person name="Squares R."/>
            <person name="Squares S."/>
            <person name="Stevens K."/>
            <person name="Taylor K."/>
            <person name="Taylor R.G."/>
            <person name="Tivey A."/>
            <person name="Walsh S.V."/>
            <person name="Warren T."/>
            <person name="Whitehead S."/>
            <person name="Woodward J.R."/>
            <person name="Volckaert G."/>
            <person name="Aert R."/>
            <person name="Robben J."/>
            <person name="Grymonprez B."/>
            <person name="Weltjens I."/>
            <person name="Vanstreels E."/>
            <person name="Rieger M."/>
            <person name="Schaefer M."/>
            <person name="Mueller-Auer S."/>
            <person name="Gabel C."/>
            <person name="Fuchs M."/>
            <person name="Duesterhoeft A."/>
            <person name="Fritzc C."/>
            <person name="Holzer E."/>
            <person name="Moestl D."/>
            <person name="Hilbert H."/>
            <person name="Borzym K."/>
            <person name="Langer I."/>
            <person name="Beck A."/>
            <person name="Lehrach H."/>
            <person name="Reinhardt R."/>
            <person name="Pohl T.M."/>
            <person name="Eger P."/>
            <person name="Zimmermann W."/>
            <person name="Wedler H."/>
            <person name="Wambutt R."/>
            <person name="Purnelle B."/>
            <person name="Goffeau A."/>
            <person name="Cadieu E."/>
            <person name="Dreano S."/>
            <person name="Gloux S."/>
            <person name="Lelaure V."/>
            <person name="Mottier S."/>
            <person name="Galibert F."/>
            <person name="Aves S.J."/>
            <person name="Xiang Z."/>
            <person name="Hunt C."/>
            <person name="Moore K."/>
            <person name="Hurst S.M."/>
            <person name="Lucas M."/>
            <person name="Rochet M."/>
            <person name="Gaillardin C."/>
            <person name="Tallada V.A."/>
            <person name="Garzon A."/>
            <person name="Thode G."/>
            <person name="Daga R.R."/>
            <person name="Cruzado L."/>
            <person name="Jimenez J."/>
            <person name="Sanchez M."/>
            <person name="del Rey F."/>
            <person name="Benito J."/>
            <person name="Dominguez A."/>
            <person name="Revuelta J.L."/>
            <person name="Moreno S."/>
            <person name="Armstrong J."/>
            <person name="Forsburg S.L."/>
            <person name="Cerutti L."/>
            <person name="Lowe T."/>
            <person name="McCombie W.R."/>
            <person name="Paulsen I."/>
            <person name="Potashkin J."/>
            <person name="Shpakovski G.V."/>
            <person name="Ussery D."/>
            <person name="Barrell B.G."/>
            <person name="Nurse P."/>
        </authorList>
    </citation>
    <scope>NUCLEOTIDE SEQUENCE [LARGE SCALE GENOMIC DNA]</scope>
    <source>
        <strain>972 / ATCC 24843</strain>
    </source>
</reference>
<protein>
    <recommendedName>
        <fullName>Calcineurin subunit B</fullName>
    </recommendedName>
    <alternativeName>
        <fullName>Calcineurin regulatory subunit</fullName>
    </alternativeName>
    <alternativeName>
        <fullName>Protein phosphatase 2B regulatory subunit</fullName>
    </alternativeName>
</protein>
<accession>Q9UU93</accession>
<gene>
    <name type="primary">cnb1</name>
    <name type="ORF">SPCC830.06</name>
</gene>
<name>CANB_SCHPO</name>
<comment type="function">
    <text evidence="1">Regulatory subunit of calcineurin, a calcium-dependent, calmodulin stimulated protein phosphatase. Confers calcium sensitivity (By similarity).</text>
</comment>
<comment type="subunit">
    <text evidence="1">Composed of a catalytic subunit (A) and a regulatory subunit (B).</text>
</comment>
<comment type="miscellaneous">
    <text evidence="1">This protein has four functional calcium-binding sites.</text>
</comment>
<comment type="similarity">
    <text evidence="3">Belongs to the calcineurin regulatory subunit family.</text>
</comment>
<proteinExistence type="inferred from homology"/>
<evidence type="ECO:0000250" key="1"/>
<evidence type="ECO:0000255" key="2">
    <source>
        <dbReference type="PROSITE-ProRule" id="PRU00448"/>
    </source>
</evidence>
<evidence type="ECO:0000305" key="3"/>
<organism>
    <name type="scientific">Schizosaccharomyces pombe (strain 972 / ATCC 24843)</name>
    <name type="common">Fission yeast</name>
    <dbReference type="NCBI Taxonomy" id="284812"/>
    <lineage>
        <taxon>Eukaryota</taxon>
        <taxon>Fungi</taxon>
        <taxon>Dikarya</taxon>
        <taxon>Ascomycota</taxon>
        <taxon>Taphrinomycotina</taxon>
        <taxon>Schizosaccharomycetes</taxon>
        <taxon>Schizosaccharomycetales</taxon>
        <taxon>Schizosaccharomycetaceae</taxon>
        <taxon>Schizosaccharomyces</taxon>
    </lineage>
</organism>
<sequence>MGQSQSQIFEDLISNSSFSNEEIERIRKRFIKIDANQSGSIDRNEFLSIPSVASNPLASRLFSVVDEDGGGDVDFQEFINSLSVFSVHGNKEEKLKFAFKIYDIDRDGYISNGELYLVLKMMVGTNLREDQLQQIVDKTIMEVDKDRDGKISFEEFKDIVSGSNVTSSMTLDSF</sequence>
<keyword id="KW-0106">Calcium</keyword>
<keyword id="KW-0479">Metal-binding</keyword>
<keyword id="KW-1185">Reference proteome</keyword>
<keyword id="KW-0677">Repeat</keyword>
<dbReference type="EMBL" id="CU329672">
    <property type="protein sequence ID" value="CAB52879.1"/>
    <property type="molecule type" value="Genomic_DNA"/>
</dbReference>
<dbReference type="PIR" id="T41632">
    <property type="entry name" value="T41632"/>
</dbReference>
<dbReference type="RefSeq" id="NP_588476.1">
    <property type="nucleotide sequence ID" value="NM_001023467.2"/>
</dbReference>
<dbReference type="SMR" id="Q9UU93"/>
<dbReference type="BioGRID" id="275367">
    <property type="interactions" value="5"/>
</dbReference>
<dbReference type="ComplexPortal" id="CPX-597">
    <property type="entry name" value="Calcineurin complex"/>
</dbReference>
<dbReference type="FunCoup" id="Q9UU93">
    <property type="interactions" value="230"/>
</dbReference>
<dbReference type="STRING" id="284812.Q9UU93"/>
<dbReference type="PaxDb" id="4896-SPCC830.06.1"/>
<dbReference type="EnsemblFungi" id="SPCC830.06.1">
    <property type="protein sequence ID" value="SPCC830.06.1:pep"/>
    <property type="gene ID" value="SPCC830.06"/>
</dbReference>
<dbReference type="GeneID" id="2538786"/>
<dbReference type="KEGG" id="spo:2538786"/>
<dbReference type="PomBase" id="SPCC830.06">
    <property type="gene designation" value="cnb1"/>
</dbReference>
<dbReference type="VEuPathDB" id="FungiDB:SPCC830.06"/>
<dbReference type="eggNOG" id="KOG0034">
    <property type="taxonomic scope" value="Eukaryota"/>
</dbReference>
<dbReference type="HOGENOM" id="CLU_061288_10_1_1"/>
<dbReference type="InParanoid" id="Q9UU93"/>
<dbReference type="OMA" id="DTNFDRD"/>
<dbReference type="PhylomeDB" id="Q9UU93"/>
<dbReference type="Reactome" id="R-SPO-2871809">
    <property type="pathway name" value="FCERI mediated Ca+2 mobilization"/>
</dbReference>
<dbReference type="Reactome" id="R-SPO-4086398">
    <property type="pathway name" value="Ca2+ pathway"/>
</dbReference>
<dbReference type="Reactome" id="R-SPO-5607763">
    <property type="pathway name" value="CLEC7A (Dectin-1) induces NFAT activation"/>
</dbReference>
<dbReference type="PRO" id="PR:Q9UU93"/>
<dbReference type="Proteomes" id="UP000002485">
    <property type="component" value="Chromosome III"/>
</dbReference>
<dbReference type="GO" id="GO:0005955">
    <property type="term" value="C:calcineurin complex"/>
    <property type="evidence" value="ECO:0000353"/>
    <property type="project" value="ComplexPortal"/>
</dbReference>
<dbReference type="GO" id="GO:0032153">
    <property type="term" value="C:cell division site"/>
    <property type="evidence" value="ECO:0000314"/>
    <property type="project" value="PomBase"/>
</dbReference>
<dbReference type="GO" id="GO:0005737">
    <property type="term" value="C:cytoplasm"/>
    <property type="evidence" value="ECO:0000314"/>
    <property type="project" value="PomBase"/>
</dbReference>
<dbReference type="GO" id="GO:0005829">
    <property type="term" value="C:cytosol"/>
    <property type="evidence" value="ECO:0007005"/>
    <property type="project" value="PomBase"/>
</dbReference>
<dbReference type="GO" id="GO:0005634">
    <property type="term" value="C:nucleus"/>
    <property type="evidence" value="ECO:0007005"/>
    <property type="project" value="PomBase"/>
</dbReference>
<dbReference type="GO" id="GO:0005509">
    <property type="term" value="F:calcium ion binding"/>
    <property type="evidence" value="ECO:0000255"/>
    <property type="project" value="PomBase"/>
</dbReference>
<dbReference type="GO" id="GO:0008597">
    <property type="term" value="F:calcium-dependent protein serine/threonine phosphatase regulator activity"/>
    <property type="evidence" value="ECO:0000318"/>
    <property type="project" value="GO_Central"/>
</dbReference>
<dbReference type="GO" id="GO:0019211">
    <property type="term" value="F:phosphatase activator activity"/>
    <property type="evidence" value="ECO:0000314"/>
    <property type="project" value="PomBase"/>
</dbReference>
<dbReference type="GO" id="GO:0019902">
    <property type="term" value="F:phosphatase binding"/>
    <property type="evidence" value="ECO:0000318"/>
    <property type="project" value="GO_Central"/>
</dbReference>
<dbReference type="GO" id="GO:0097720">
    <property type="term" value="P:calcineurin-mediated signaling"/>
    <property type="evidence" value="ECO:0000318"/>
    <property type="project" value="GO_Central"/>
</dbReference>
<dbReference type="GO" id="GO:0006874">
    <property type="term" value="P:intracellular calcium ion homeostasis"/>
    <property type="evidence" value="ECO:0000304"/>
    <property type="project" value="PomBase"/>
</dbReference>
<dbReference type="GO" id="GO:0022604">
    <property type="term" value="P:regulation of cell morphogenesis"/>
    <property type="evidence" value="ECO:0000315"/>
    <property type="project" value="ComplexPortal"/>
</dbReference>
<dbReference type="CDD" id="cd00051">
    <property type="entry name" value="EFh"/>
    <property type="match status" value="1"/>
</dbReference>
<dbReference type="FunFam" id="1.10.238.10:FF:000047">
    <property type="entry name" value="Calcineurin subunit B type 1"/>
    <property type="match status" value="1"/>
</dbReference>
<dbReference type="Gene3D" id="1.10.238.10">
    <property type="entry name" value="EF-hand"/>
    <property type="match status" value="1"/>
</dbReference>
<dbReference type="InterPro" id="IPR011992">
    <property type="entry name" value="EF-hand-dom_pair"/>
</dbReference>
<dbReference type="InterPro" id="IPR018247">
    <property type="entry name" value="EF_Hand_1_Ca_BS"/>
</dbReference>
<dbReference type="InterPro" id="IPR002048">
    <property type="entry name" value="EF_hand_dom"/>
</dbReference>
<dbReference type="PANTHER" id="PTHR45942">
    <property type="entry name" value="PROTEIN PHOSPATASE 3 REGULATORY SUBUNIT B ALPHA ISOFORM TYPE 1"/>
    <property type="match status" value="1"/>
</dbReference>
<dbReference type="Pfam" id="PF13202">
    <property type="entry name" value="EF-hand_5"/>
    <property type="match status" value="1"/>
</dbReference>
<dbReference type="Pfam" id="PF13499">
    <property type="entry name" value="EF-hand_7"/>
    <property type="match status" value="1"/>
</dbReference>
<dbReference type="PRINTS" id="PR00450">
    <property type="entry name" value="RECOVERIN"/>
</dbReference>
<dbReference type="SMART" id="SM00054">
    <property type="entry name" value="EFh"/>
    <property type="match status" value="4"/>
</dbReference>
<dbReference type="SUPFAM" id="SSF47473">
    <property type="entry name" value="EF-hand"/>
    <property type="match status" value="1"/>
</dbReference>
<dbReference type="PROSITE" id="PS00018">
    <property type="entry name" value="EF_HAND_1"/>
    <property type="match status" value="4"/>
</dbReference>
<dbReference type="PROSITE" id="PS50222">
    <property type="entry name" value="EF_HAND_2"/>
    <property type="match status" value="4"/>
</dbReference>